<protein>
    <recommendedName>
        <fullName evidence="1">Enolase</fullName>
        <ecNumber evidence="1">4.2.1.11</ecNumber>
    </recommendedName>
    <alternativeName>
        <fullName evidence="1">2-phospho-D-glycerate hydro-lyase</fullName>
    </alternativeName>
    <alternativeName>
        <fullName evidence="1">2-phosphoglycerate dehydratase</fullName>
    </alternativeName>
</protein>
<organism>
    <name type="scientific">Streptococcus equi subsp. zooepidemicus (strain MGCS10565)</name>
    <dbReference type="NCBI Taxonomy" id="552526"/>
    <lineage>
        <taxon>Bacteria</taxon>
        <taxon>Bacillati</taxon>
        <taxon>Bacillota</taxon>
        <taxon>Bacilli</taxon>
        <taxon>Lactobacillales</taxon>
        <taxon>Streptococcaceae</taxon>
        <taxon>Streptococcus</taxon>
    </lineage>
</organism>
<accession>B4U2B8</accession>
<feature type="chain" id="PRO_1000115916" description="Enolase">
    <location>
        <begin position="1"/>
        <end position="435"/>
    </location>
</feature>
<feature type="active site" description="Proton donor" evidence="1">
    <location>
        <position position="205"/>
    </location>
</feature>
<feature type="active site" description="Proton acceptor" evidence="1">
    <location>
        <position position="344"/>
    </location>
</feature>
<feature type="binding site" evidence="1">
    <location>
        <position position="163"/>
    </location>
    <ligand>
        <name>(2R)-2-phosphoglycerate</name>
        <dbReference type="ChEBI" id="CHEBI:58289"/>
    </ligand>
</feature>
<feature type="binding site" evidence="1">
    <location>
        <position position="243"/>
    </location>
    <ligand>
        <name>Mg(2+)</name>
        <dbReference type="ChEBI" id="CHEBI:18420"/>
    </ligand>
</feature>
<feature type="binding site" evidence="1">
    <location>
        <position position="292"/>
    </location>
    <ligand>
        <name>Mg(2+)</name>
        <dbReference type="ChEBI" id="CHEBI:18420"/>
    </ligand>
</feature>
<feature type="binding site" evidence="1">
    <location>
        <position position="319"/>
    </location>
    <ligand>
        <name>Mg(2+)</name>
        <dbReference type="ChEBI" id="CHEBI:18420"/>
    </ligand>
</feature>
<feature type="binding site" evidence="1">
    <location>
        <position position="344"/>
    </location>
    <ligand>
        <name>(2R)-2-phosphoglycerate</name>
        <dbReference type="ChEBI" id="CHEBI:58289"/>
    </ligand>
</feature>
<feature type="binding site" evidence="1">
    <location>
        <position position="373"/>
    </location>
    <ligand>
        <name>(2R)-2-phosphoglycerate</name>
        <dbReference type="ChEBI" id="CHEBI:58289"/>
    </ligand>
</feature>
<feature type="binding site" evidence="1">
    <location>
        <position position="374"/>
    </location>
    <ligand>
        <name>(2R)-2-phosphoglycerate</name>
        <dbReference type="ChEBI" id="CHEBI:58289"/>
    </ligand>
</feature>
<feature type="binding site" evidence="1">
    <location>
        <position position="395"/>
    </location>
    <ligand>
        <name>(2R)-2-phosphoglycerate</name>
        <dbReference type="ChEBI" id="CHEBI:58289"/>
    </ligand>
</feature>
<evidence type="ECO:0000255" key="1">
    <source>
        <dbReference type="HAMAP-Rule" id="MF_00318"/>
    </source>
</evidence>
<comment type="function">
    <text evidence="1">Catalyzes the reversible conversion of 2-phosphoglycerate (2-PG) into phosphoenolpyruvate (PEP). It is essential for the degradation of carbohydrates via glycolysis.</text>
</comment>
<comment type="catalytic activity">
    <reaction evidence="1">
        <text>(2R)-2-phosphoglycerate = phosphoenolpyruvate + H2O</text>
        <dbReference type="Rhea" id="RHEA:10164"/>
        <dbReference type="ChEBI" id="CHEBI:15377"/>
        <dbReference type="ChEBI" id="CHEBI:58289"/>
        <dbReference type="ChEBI" id="CHEBI:58702"/>
        <dbReference type="EC" id="4.2.1.11"/>
    </reaction>
</comment>
<comment type="cofactor">
    <cofactor evidence="1">
        <name>Mg(2+)</name>
        <dbReference type="ChEBI" id="CHEBI:18420"/>
    </cofactor>
    <text evidence="1">Binds a second Mg(2+) ion via substrate during catalysis.</text>
</comment>
<comment type="pathway">
    <text evidence="1">Carbohydrate degradation; glycolysis; pyruvate from D-glyceraldehyde 3-phosphate: step 4/5.</text>
</comment>
<comment type="subcellular location">
    <subcellularLocation>
        <location evidence="1">Cytoplasm</location>
    </subcellularLocation>
    <subcellularLocation>
        <location evidence="1">Secreted</location>
    </subcellularLocation>
    <subcellularLocation>
        <location evidence="1">Cell surface</location>
    </subcellularLocation>
    <text evidence="1">Fractions of enolase are present in both the cytoplasm and on the cell surface.</text>
</comment>
<comment type="similarity">
    <text evidence="1">Belongs to the enolase family.</text>
</comment>
<gene>
    <name evidence="1" type="primary">eno</name>
    <name type="ordered locus">Sez_0774</name>
</gene>
<proteinExistence type="inferred from homology"/>
<sequence>MSIITDVYAREVLDSRGNPTLEVEVYTESGAFGRGMVPSGASTGEHEAVELRDGDKSRYLGLGTQKAVDNVNNIIAEAIIGYDVRDQQAIDRAMIALDGTPNKGKLGANAILGVSIAVARAAADYLEVPLYTYLGGFNTKVLPTPMMNIINGGSHSDAPIAFQEFMIMPVGAPTFKEGLRWGAEVFHALKKILKARGLVTAVGDEGGFAPKFEGTEDGVETILKAIEAAGYEAGENGIMIGFDCASSEFYDKERKVYDYTKFEGEGAAVRTSAEQIDYLEELVNKYPIITIEDGMDENDWEGWKALTERLGKRVQLVGDDFFVTNTEYLARGIKEGAANSILIKVNQIGTLTETFEAIEMAKEAGYTAVVSHRSGETEDSTIADIAVATNAGQIKTGSLSRTDRIAKYNQLLRIEDQLGEVAQYKGIKSFYNLKK</sequence>
<keyword id="KW-0963">Cytoplasm</keyword>
<keyword id="KW-0324">Glycolysis</keyword>
<keyword id="KW-0456">Lyase</keyword>
<keyword id="KW-0460">Magnesium</keyword>
<keyword id="KW-0479">Metal-binding</keyword>
<keyword id="KW-0964">Secreted</keyword>
<name>ENO_STREM</name>
<reference key="1">
    <citation type="journal article" date="2008" name="PLoS ONE">
        <title>Genome sequence of a lancefield group C Streptococcus zooepidemicus strain causing epidemic nephritis: new information about an old disease.</title>
        <authorList>
            <person name="Beres S.B."/>
            <person name="Sesso R."/>
            <person name="Pinto S.W.L."/>
            <person name="Hoe N.P."/>
            <person name="Porcella S.F."/>
            <person name="Deleo F.R."/>
            <person name="Musser J.M."/>
        </authorList>
    </citation>
    <scope>NUCLEOTIDE SEQUENCE [LARGE SCALE GENOMIC DNA]</scope>
    <source>
        <strain>MGCS10565</strain>
    </source>
</reference>
<dbReference type="EC" id="4.2.1.11" evidence="1"/>
<dbReference type="EMBL" id="CP001129">
    <property type="protein sequence ID" value="ACG62135.1"/>
    <property type="molecule type" value="Genomic_DNA"/>
</dbReference>
<dbReference type="RefSeq" id="WP_012515409.1">
    <property type="nucleotide sequence ID" value="NC_011134.1"/>
</dbReference>
<dbReference type="SMR" id="B4U2B8"/>
<dbReference type="GeneID" id="83704657"/>
<dbReference type="KEGG" id="sez:Sez_0774"/>
<dbReference type="HOGENOM" id="CLU_031223_2_1_9"/>
<dbReference type="UniPathway" id="UPA00109">
    <property type="reaction ID" value="UER00187"/>
</dbReference>
<dbReference type="Proteomes" id="UP000001873">
    <property type="component" value="Chromosome"/>
</dbReference>
<dbReference type="GO" id="GO:0009986">
    <property type="term" value="C:cell surface"/>
    <property type="evidence" value="ECO:0007669"/>
    <property type="project" value="UniProtKB-SubCell"/>
</dbReference>
<dbReference type="GO" id="GO:0005576">
    <property type="term" value="C:extracellular region"/>
    <property type="evidence" value="ECO:0007669"/>
    <property type="project" value="UniProtKB-SubCell"/>
</dbReference>
<dbReference type="GO" id="GO:0009274">
    <property type="term" value="C:peptidoglycan-based cell wall"/>
    <property type="evidence" value="ECO:0007669"/>
    <property type="project" value="UniProtKB-ARBA"/>
</dbReference>
<dbReference type="GO" id="GO:0000015">
    <property type="term" value="C:phosphopyruvate hydratase complex"/>
    <property type="evidence" value="ECO:0007669"/>
    <property type="project" value="InterPro"/>
</dbReference>
<dbReference type="GO" id="GO:0000287">
    <property type="term" value="F:magnesium ion binding"/>
    <property type="evidence" value="ECO:0007669"/>
    <property type="project" value="UniProtKB-UniRule"/>
</dbReference>
<dbReference type="GO" id="GO:0004634">
    <property type="term" value="F:phosphopyruvate hydratase activity"/>
    <property type="evidence" value="ECO:0007669"/>
    <property type="project" value="UniProtKB-UniRule"/>
</dbReference>
<dbReference type="GO" id="GO:0006096">
    <property type="term" value="P:glycolytic process"/>
    <property type="evidence" value="ECO:0007669"/>
    <property type="project" value="UniProtKB-UniRule"/>
</dbReference>
<dbReference type="CDD" id="cd03313">
    <property type="entry name" value="enolase"/>
    <property type="match status" value="1"/>
</dbReference>
<dbReference type="FunFam" id="3.20.20.120:FF:000001">
    <property type="entry name" value="Enolase"/>
    <property type="match status" value="1"/>
</dbReference>
<dbReference type="FunFam" id="3.30.390.10:FF:000001">
    <property type="entry name" value="Enolase"/>
    <property type="match status" value="1"/>
</dbReference>
<dbReference type="Gene3D" id="3.20.20.120">
    <property type="entry name" value="Enolase-like C-terminal domain"/>
    <property type="match status" value="1"/>
</dbReference>
<dbReference type="Gene3D" id="3.30.390.10">
    <property type="entry name" value="Enolase-like, N-terminal domain"/>
    <property type="match status" value="1"/>
</dbReference>
<dbReference type="HAMAP" id="MF_00318">
    <property type="entry name" value="Enolase"/>
    <property type="match status" value="1"/>
</dbReference>
<dbReference type="InterPro" id="IPR000941">
    <property type="entry name" value="Enolase"/>
</dbReference>
<dbReference type="InterPro" id="IPR036849">
    <property type="entry name" value="Enolase-like_C_sf"/>
</dbReference>
<dbReference type="InterPro" id="IPR029017">
    <property type="entry name" value="Enolase-like_N"/>
</dbReference>
<dbReference type="InterPro" id="IPR020810">
    <property type="entry name" value="Enolase_C"/>
</dbReference>
<dbReference type="InterPro" id="IPR020809">
    <property type="entry name" value="Enolase_CS"/>
</dbReference>
<dbReference type="InterPro" id="IPR020811">
    <property type="entry name" value="Enolase_N"/>
</dbReference>
<dbReference type="NCBIfam" id="TIGR01060">
    <property type="entry name" value="eno"/>
    <property type="match status" value="1"/>
</dbReference>
<dbReference type="PANTHER" id="PTHR11902">
    <property type="entry name" value="ENOLASE"/>
    <property type="match status" value="1"/>
</dbReference>
<dbReference type="PANTHER" id="PTHR11902:SF1">
    <property type="entry name" value="ENOLASE"/>
    <property type="match status" value="1"/>
</dbReference>
<dbReference type="Pfam" id="PF00113">
    <property type="entry name" value="Enolase_C"/>
    <property type="match status" value="1"/>
</dbReference>
<dbReference type="Pfam" id="PF03952">
    <property type="entry name" value="Enolase_N"/>
    <property type="match status" value="1"/>
</dbReference>
<dbReference type="PIRSF" id="PIRSF001400">
    <property type="entry name" value="Enolase"/>
    <property type="match status" value="1"/>
</dbReference>
<dbReference type="PRINTS" id="PR00148">
    <property type="entry name" value="ENOLASE"/>
</dbReference>
<dbReference type="SFLD" id="SFLDS00001">
    <property type="entry name" value="Enolase"/>
    <property type="match status" value="1"/>
</dbReference>
<dbReference type="SFLD" id="SFLDF00002">
    <property type="entry name" value="enolase"/>
    <property type="match status" value="1"/>
</dbReference>
<dbReference type="SMART" id="SM01192">
    <property type="entry name" value="Enolase_C"/>
    <property type="match status" value="1"/>
</dbReference>
<dbReference type="SMART" id="SM01193">
    <property type="entry name" value="Enolase_N"/>
    <property type="match status" value="1"/>
</dbReference>
<dbReference type="SUPFAM" id="SSF51604">
    <property type="entry name" value="Enolase C-terminal domain-like"/>
    <property type="match status" value="1"/>
</dbReference>
<dbReference type="SUPFAM" id="SSF54826">
    <property type="entry name" value="Enolase N-terminal domain-like"/>
    <property type="match status" value="1"/>
</dbReference>
<dbReference type="PROSITE" id="PS00164">
    <property type="entry name" value="ENOLASE"/>
    <property type="match status" value="1"/>
</dbReference>